<comment type="function">
    <text evidence="2 3">Has primarily calcium-dependent phospholipase and lysophospholipase activities, with a major role in membrane lipid remodeling and biosynthesis of lipid mediators of the inflammatory response (By similarity). Plays an important role in embryo implantation and parturition through its ability to trigger prostanoid production (By similarity). Preferentially hydrolyzes the ester bond of the fatty acyl group attached at sn-2 position of phospholipids (phospholipase A2 activity). Selectively hydrolyzes sn-2 arachidonoyl group from membrane phospholipids, providing the precursor for eicosanoid biosynthesis via the cyclooxygenase pathway. In an alternative pathway of eicosanoid biosynthesis, hydrolyzes sn-2 fatty acyl chain of eicosanoid lysophopholipids to release free bioactive eicosanoids. Hydrolyzes the ester bond of the fatty acyl group attached at sn-1 position of phospholipids (phospholipase A1 activity) only if an ether linkage rather than an ester linkage is present at the sn-2 position. This hydrolysis is not stereospecific. Has calcium-independent phospholipase A2 and lysophospholipase activities in the presence of phosphoinositides. Has O-acyltransferase activity. Catalyzes the transfer of fatty acyl chains from phospholipids to a primary hydroxyl group of glycerol (sn-1 or sn-3), potentially contributing to monoacylglycerol synthesis (By similarity).</text>
</comment>
<comment type="catalytic activity">
    <reaction evidence="2">
        <text>a 1,2-diacyl-sn-glycero-3-phosphocholine + H2O = a 1-acyl-sn-glycero-3-phosphocholine + a fatty acid + H(+)</text>
        <dbReference type="Rhea" id="RHEA:15801"/>
        <dbReference type="ChEBI" id="CHEBI:15377"/>
        <dbReference type="ChEBI" id="CHEBI:15378"/>
        <dbReference type="ChEBI" id="CHEBI:28868"/>
        <dbReference type="ChEBI" id="CHEBI:57643"/>
        <dbReference type="ChEBI" id="CHEBI:58168"/>
        <dbReference type="EC" id="3.1.1.4"/>
    </reaction>
    <physiologicalReaction direction="left-to-right" evidence="2">
        <dbReference type="Rhea" id="RHEA:15802"/>
    </physiologicalReaction>
</comment>
<comment type="catalytic activity">
    <reaction evidence="2">
        <text>a 1-O-alkyl-2-acyl-sn-glycero-3-phosphocholine + H2O = a 1-O-alkyl-sn-glycero-3-phosphocholine + a fatty acid + H(+)</text>
        <dbReference type="Rhea" id="RHEA:36231"/>
        <dbReference type="ChEBI" id="CHEBI:15377"/>
        <dbReference type="ChEBI" id="CHEBI:15378"/>
        <dbReference type="ChEBI" id="CHEBI:28868"/>
        <dbReference type="ChEBI" id="CHEBI:30909"/>
        <dbReference type="ChEBI" id="CHEBI:36702"/>
        <dbReference type="EC" id="3.1.1.4"/>
    </reaction>
    <physiologicalReaction direction="left-to-right" evidence="2">
        <dbReference type="Rhea" id="RHEA:36232"/>
    </physiologicalReaction>
</comment>
<comment type="catalytic activity">
    <reaction evidence="2">
        <text>a 1-acyl-sn-glycero-3-phosphocholine + H2O = sn-glycerol 3-phosphocholine + a fatty acid + H(+)</text>
        <dbReference type="Rhea" id="RHEA:15177"/>
        <dbReference type="ChEBI" id="CHEBI:15377"/>
        <dbReference type="ChEBI" id="CHEBI:15378"/>
        <dbReference type="ChEBI" id="CHEBI:16870"/>
        <dbReference type="ChEBI" id="CHEBI:28868"/>
        <dbReference type="ChEBI" id="CHEBI:58168"/>
        <dbReference type="EC" id="3.1.1.5"/>
    </reaction>
    <physiologicalReaction direction="left-to-right" evidence="2">
        <dbReference type="Rhea" id="RHEA:15178"/>
    </physiologicalReaction>
</comment>
<comment type="catalytic activity">
    <reaction evidence="2">
        <text>1-hexadecanoyl-2-(5Z,8Z,11Z,14Z-eicosatetraenoyl)-sn-glycero-3-phosphocholine + H2O = 1-hexadecanoyl-sn-glycero-3-phosphocholine + (5Z,8Z,11Z,14Z)-eicosatetraenoate + H(+)</text>
        <dbReference type="Rhea" id="RHEA:40427"/>
        <dbReference type="ChEBI" id="CHEBI:15377"/>
        <dbReference type="ChEBI" id="CHEBI:15378"/>
        <dbReference type="ChEBI" id="CHEBI:32395"/>
        <dbReference type="ChEBI" id="CHEBI:72998"/>
        <dbReference type="ChEBI" id="CHEBI:73003"/>
    </reaction>
    <physiologicalReaction direction="left-to-right" evidence="2">
        <dbReference type="Rhea" id="RHEA:40428"/>
    </physiologicalReaction>
</comment>
<comment type="catalytic activity">
    <reaction evidence="2">
        <text>1,2-di-(5Z,8Z,11Z,14Z-eicosatetraenoyl)-sn-glycero-3-phosphocholine + H2O = 1-(5Z,8Z,11Z,14Z-eicosatetraenoyl)-sn-glycero-3-phosphocholine + (5Z,8Z,11Z,14Z)-eicosatetraenoate + H(+)</text>
        <dbReference type="Rhea" id="RHEA:41075"/>
        <dbReference type="ChEBI" id="CHEBI:15377"/>
        <dbReference type="ChEBI" id="CHEBI:15378"/>
        <dbReference type="ChEBI" id="CHEBI:32395"/>
        <dbReference type="ChEBI" id="CHEBI:60657"/>
        <dbReference type="ChEBI" id="CHEBI:74344"/>
    </reaction>
    <physiologicalReaction direction="left-to-right" evidence="2">
        <dbReference type="Rhea" id="RHEA:41076"/>
    </physiologicalReaction>
</comment>
<comment type="catalytic activity">
    <reaction evidence="2">
        <text>1-octadecanoyl-2-(5Z,8Z,11Z,14Z-eicosatetraenoyl)-sn-glycero-3-phosphocholine + H2O = 1-octadecanoyl-sn-glycero-3-phosphocholine + (5Z,8Z,11Z,14Z)-eicosatetraenoate + H(+)</text>
        <dbReference type="Rhea" id="RHEA:40519"/>
        <dbReference type="ChEBI" id="CHEBI:15377"/>
        <dbReference type="ChEBI" id="CHEBI:15378"/>
        <dbReference type="ChEBI" id="CHEBI:32395"/>
        <dbReference type="ChEBI" id="CHEBI:73858"/>
        <dbReference type="ChEBI" id="CHEBI:74965"/>
    </reaction>
    <physiologicalReaction direction="left-to-right" evidence="2">
        <dbReference type="Rhea" id="RHEA:40520"/>
    </physiologicalReaction>
</comment>
<comment type="catalytic activity">
    <reaction evidence="2">
        <text>1-hexadecanoyl-2-(9Z,12Z-octadecadienoyl)-sn-glycero-3-phosphocholine + H2O = (9Z,12Z)-octadecadienoate + 1-hexadecanoyl-sn-glycero-3-phosphocholine + H(+)</text>
        <dbReference type="Rhea" id="RHEA:40811"/>
        <dbReference type="ChEBI" id="CHEBI:15377"/>
        <dbReference type="ChEBI" id="CHEBI:15378"/>
        <dbReference type="ChEBI" id="CHEBI:30245"/>
        <dbReference type="ChEBI" id="CHEBI:72998"/>
        <dbReference type="ChEBI" id="CHEBI:73002"/>
    </reaction>
    <physiologicalReaction direction="left-to-right" evidence="2">
        <dbReference type="Rhea" id="RHEA:40812"/>
    </physiologicalReaction>
</comment>
<comment type="catalytic activity">
    <reaction evidence="2">
        <text>1-octadecanoyl-2-(9Z,12Z,15Z-octadecatrienoyl)-sn-glycero-3-phosphocholine + H2O = (9Z,12Z,15Z)-octadecatrienoate + 1-octadecanoyl-sn-glycero-3-phosphocholine + H(+)</text>
        <dbReference type="Rhea" id="RHEA:41307"/>
        <dbReference type="ChEBI" id="CHEBI:15377"/>
        <dbReference type="ChEBI" id="CHEBI:15378"/>
        <dbReference type="ChEBI" id="CHEBI:32387"/>
        <dbReference type="ChEBI" id="CHEBI:73858"/>
        <dbReference type="ChEBI" id="CHEBI:78022"/>
    </reaction>
    <physiologicalReaction direction="left-to-right" evidence="2">
        <dbReference type="Rhea" id="RHEA:41308"/>
    </physiologicalReaction>
</comment>
<comment type="catalytic activity">
    <reaction evidence="2">
        <text>1-(5Z,8Z,11Z,14Z-eicosatetraenoyl)-2-hexadecanoyl-sn-glycero-3-phosphocholine + H2O = 1-(5Z,8Z,11Z,14Z-eicosatetraenoyl)-sn-glycero-3-phosphocholine + hexadecanoate + H(+)</text>
        <dbReference type="Rhea" id="RHEA:41071"/>
        <dbReference type="ChEBI" id="CHEBI:7896"/>
        <dbReference type="ChEBI" id="CHEBI:15377"/>
        <dbReference type="ChEBI" id="CHEBI:15378"/>
        <dbReference type="ChEBI" id="CHEBI:74344"/>
        <dbReference type="ChEBI" id="CHEBI:77694"/>
    </reaction>
    <physiologicalReaction direction="left-to-right" evidence="2">
        <dbReference type="Rhea" id="RHEA:41072"/>
    </physiologicalReaction>
</comment>
<comment type="catalytic activity">
    <reaction evidence="2">
        <text>1-O-hexadecyl-2-(5Z,8Z,11Z,14Z)-eicosatetraenoyl-sn-glycero-3-phosphocholine + H2O = 1-O-hexadecyl-sn-glycero-3-phosphocholine + (5Z,8Z,11Z,14Z)-eicosatetraenoate + H(+)</text>
        <dbReference type="Rhea" id="RHEA:41067"/>
        <dbReference type="ChEBI" id="CHEBI:15377"/>
        <dbReference type="ChEBI" id="CHEBI:15378"/>
        <dbReference type="ChEBI" id="CHEBI:32395"/>
        <dbReference type="ChEBI" id="CHEBI:55430"/>
        <dbReference type="ChEBI" id="CHEBI:64496"/>
    </reaction>
    <physiologicalReaction direction="left-to-right" evidence="2">
        <dbReference type="Rhea" id="RHEA:41068"/>
    </physiologicalReaction>
</comment>
<comment type="catalytic activity">
    <reaction evidence="2">
        <text>1,2-di-(9Z-octadecenoyl)-sn-glycero-3-phospho-(1'-sn-glycerol) + H2O = 1-(9Z-octadecenoyl)-sn-glycero-3-phospho-(1'-sn-glycerol) + (9Z)-octadecenoate + H(+)</text>
        <dbReference type="Rhea" id="RHEA:41123"/>
        <dbReference type="ChEBI" id="CHEBI:15377"/>
        <dbReference type="ChEBI" id="CHEBI:15378"/>
        <dbReference type="ChEBI" id="CHEBI:30823"/>
        <dbReference type="ChEBI" id="CHEBI:72828"/>
        <dbReference type="ChEBI" id="CHEBI:75163"/>
    </reaction>
    <physiologicalReaction direction="left-to-right" evidence="2">
        <dbReference type="Rhea" id="RHEA:41124"/>
    </physiologicalReaction>
</comment>
<comment type="catalytic activity">
    <reaction evidence="2">
        <text>1-octadecanoyl-2-(5Z,8Z,11Z,14Z-eicosatetraenoyl)-sn-glycero-3-phosphate + H2O = 1-octadecanoyl-sn-glycero-3-phosphate + (5Z,8Z,11Z,14Z)-eicosatetraenoate + H(+)</text>
        <dbReference type="Rhea" id="RHEA:40451"/>
        <dbReference type="ChEBI" id="CHEBI:15377"/>
        <dbReference type="ChEBI" id="CHEBI:15378"/>
        <dbReference type="ChEBI" id="CHEBI:32395"/>
        <dbReference type="ChEBI" id="CHEBI:74565"/>
        <dbReference type="ChEBI" id="CHEBI:77091"/>
    </reaction>
    <physiologicalReaction direction="left-to-right" evidence="2">
        <dbReference type="Rhea" id="RHEA:40452"/>
    </physiologicalReaction>
</comment>
<comment type="catalytic activity">
    <reaction evidence="2">
        <text>1-hexadecanoyl-sn-glycero-3-phosphocholine + H2O = sn-glycerol 3-phosphocholine + hexadecanoate + H(+)</text>
        <dbReference type="Rhea" id="RHEA:40435"/>
        <dbReference type="ChEBI" id="CHEBI:7896"/>
        <dbReference type="ChEBI" id="CHEBI:15377"/>
        <dbReference type="ChEBI" id="CHEBI:15378"/>
        <dbReference type="ChEBI" id="CHEBI:16870"/>
        <dbReference type="ChEBI" id="CHEBI:72998"/>
    </reaction>
    <physiologicalReaction direction="left-to-right" evidence="2">
        <dbReference type="Rhea" id="RHEA:40436"/>
    </physiologicalReaction>
</comment>
<comment type="catalytic activity">
    <reaction evidence="2">
        <text>2-(prostaglandin E2)-sn-glycero-3-phosphoethanolamine + H2O = sn-glycero-3-phosphoethanolamine + prostaglandin E2 + H(+)</text>
        <dbReference type="Rhea" id="RHEA:53704"/>
        <dbReference type="ChEBI" id="CHEBI:15377"/>
        <dbReference type="ChEBI" id="CHEBI:15378"/>
        <dbReference type="ChEBI" id="CHEBI:137581"/>
        <dbReference type="ChEBI" id="CHEBI:143890"/>
        <dbReference type="ChEBI" id="CHEBI:606564"/>
    </reaction>
    <physiologicalReaction direction="left-to-right" evidence="2">
        <dbReference type="Rhea" id="RHEA:53705"/>
    </physiologicalReaction>
</comment>
<comment type="catalytic activity">
    <reaction evidence="2">
        <text>2-[(15S)-hydroxy-(5Z,8Z,11Z,13E)-eicosatetraenoyl]-sn-glycero-3-phosphocholine + H2O = (15S)-hydroxy-(5Z,8Z,11Z,13E)-eicosatetraenoate + sn-glycerol 3-phosphocholine + H(+)</text>
        <dbReference type="Rhea" id="RHEA:53700"/>
        <dbReference type="ChEBI" id="CHEBI:15377"/>
        <dbReference type="ChEBI" id="CHEBI:15378"/>
        <dbReference type="ChEBI" id="CHEBI:16870"/>
        <dbReference type="ChEBI" id="CHEBI:57409"/>
        <dbReference type="ChEBI" id="CHEBI:137584"/>
    </reaction>
    <physiologicalReaction direction="left-to-right" evidence="2">
        <dbReference type="Rhea" id="RHEA:53701"/>
    </physiologicalReaction>
</comment>
<comment type="catalytic activity">
    <reaction evidence="2">
        <text>2-[(15R)-hydroxy-(5Z,8Z,11Z,13E)-eicosatetraenoyl]-sn-glycero-3-phosphocholine + H2O = (15R)-hydroxy-(5Z,8Z,11Z,13E)-eicosatetraenoate + sn-glycerol 3-phosphocholine + H(+)</text>
        <dbReference type="Rhea" id="RHEA:53696"/>
        <dbReference type="ChEBI" id="CHEBI:15377"/>
        <dbReference type="ChEBI" id="CHEBI:15378"/>
        <dbReference type="ChEBI" id="CHEBI:16870"/>
        <dbReference type="ChEBI" id="CHEBI:78837"/>
        <dbReference type="ChEBI" id="CHEBI:137583"/>
    </reaction>
    <physiologicalReaction direction="left-to-right" evidence="2">
        <dbReference type="Rhea" id="RHEA:53697"/>
    </physiologicalReaction>
</comment>
<comment type="catalytic activity">
    <reaction evidence="2">
        <text>2-(prostaglandin E2)-sn-glycero-3-phosphocholine + H2O = prostaglandin E2 + sn-glycerol 3-phosphocholine + H(+)</text>
        <dbReference type="Rhea" id="RHEA:53692"/>
        <dbReference type="ChEBI" id="CHEBI:15377"/>
        <dbReference type="ChEBI" id="CHEBI:15378"/>
        <dbReference type="ChEBI" id="CHEBI:16870"/>
        <dbReference type="ChEBI" id="CHEBI:137585"/>
        <dbReference type="ChEBI" id="CHEBI:606564"/>
    </reaction>
    <physiologicalReaction direction="left-to-right" evidence="2">
        <dbReference type="Rhea" id="RHEA:53693"/>
    </physiologicalReaction>
</comment>
<comment type="catalytic activity">
    <reaction evidence="2">
        <text>2-[(11R)-hydroxy-(5Z,8Z,12E,14Z)-eicosatetraenoyl]-sn-glycero-3-phosphocholine + H2O = (11R)-hydroxy-(5Z,8Z,12E,14Z)-eicosatetraenoate + sn-glycerol 3-phosphocholine + H(+)</text>
        <dbReference type="Rhea" id="RHEA:53688"/>
        <dbReference type="ChEBI" id="CHEBI:15377"/>
        <dbReference type="ChEBI" id="CHEBI:15378"/>
        <dbReference type="ChEBI" id="CHEBI:16870"/>
        <dbReference type="ChEBI" id="CHEBI:78836"/>
        <dbReference type="ChEBI" id="CHEBI:137582"/>
    </reaction>
    <physiologicalReaction direction="left-to-right" evidence="2">
        <dbReference type="Rhea" id="RHEA:53689"/>
    </physiologicalReaction>
</comment>
<comment type="catalytic activity">
    <reaction evidence="2">
        <text>1-(5Z,8Z,11Z,14Z-eicosatetraenoyl)-2-O-hexadecyl-sn-glycero-3-phosphocholine + H2O = 2-O-hexadecyl-sn-glycero-3-phosphocholine + (5Z,8Z,11Z,14Z)-eicosatetraenoate + H(+)</text>
        <dbReference type="Rhea" id="RHEA:41271"/>
        <dbReference type="ChEBI" id="CHEBI:15377"/>
        <dbReference type="ChEBI" id="CHEBI:15378"/>
        <dbReference type="ChEBI" id="CHEBI:32395"/>
        <dbReference type="ChEBI" id="CHEBI:77695"/>
        <dbReference type="ChEBI" id="CHEBI:77696"/>
    </reaction>
    <physiologicalReaction direction="left-to-right" evidence="2">
        <dbReference type="Rhea" id="RHEA:41272"/>
    </physiologicalReaction>
</comment>
<comment type="catalytic activity">
    <reaction evidence="2">
        <text>1-octadecanoyl-2-(5Z,8Z,11Z,14Z-eicosatetraenoyl)-sn-glycero-3-phosphocholine + glycerol = 1-(5Z,8Z,11Z,14Z-eicosatetraenoyl)-glycerol + 1-octadecanoyl-sn-glycero-3-phosphocholine</text>
        <dbReference type="Rhea" id="RHEA:41099"/>
        <dbReference type="ChEBI" id="CHEBI:17754"/>
        <dbReference type="ChEBI" id="CHEBI:73858"/>
        <dbReference type="ChEBI" id="CHEBI:74965"/>
        <dbReference type="ChEBI" id="CHEBI:75612"/>
    </reaction>
    <physiologicalReaction direction="left-to-right" evidence="2">
        <dbReference type="Rhea" id="RHEA:41100"/>
    </physiologicalReaction>
</comment>
<comment type="catalytic activity">
    <reaction evidence="2">
        <text>1-octadecanoyl-2-(9Z,12Z,15Z-octadecatrienoyl)-sn-glycero-3-phosphocholine + glycerol = 1-(9Z,12Z,15Z-octadecatrienoyl)-glycerol + 1-octadecanoyl-sn-glycero-3-phosphocholine</text>
        <dbReference type="Rhea" id="RHEA:41087"/>
        <dbReference type="ChEBI" id="CHEBI:17754"/>
        <dbReference type="ChEBI" id="CHEBI:73858"/>
        <dbReference type="ChEBI" id="CHEBI:75610"/>
        <dbReference type="ChEBI" id="CHEBI:78022"/>
    </reaction>
    <physiologicalReaction direction="left-to-right" evidence="2">
        <dbReference type="Rhea" id="RHEA:41088"/>
    </physiologicalReaction>
</comment>
<comment type="activity regulation">
    <text evidence="2 3">Activated by cytosolic calcium, which is necessary for binding to membrane lipids. Activated by phosphorylation in response to mitogenic stimuli.</text>
</comment>
<comment type="pathway">
    <text evidence="3">Membrane lipid metabolism; glycerophospholipid metabolism.</text>
</comment>
<comment type="pathway">
    <text evidence="2">Lipid metabolism; arachidonate metabolism.</text>
</comment>
<comment type="pathway">
    <text evidence="2">Lipid metabolism; prostaglandin biosynthesis.</text>
</comment>
<comment type="pathway">
    <text evidence="2">Lipid metabolism; leukotriene B4 biosynthesis.</text>
</comment>
<comment type="subunit">
    <text evidence="2">Interacts with KAT5.</text>
</comment>
<comment type="subcellular location">
    <subcellularLocation>
        <location evidence="2">Cytoplasm</location>
    </subcellularLocation>
    <subcellularLocation>
        <location evidence="2">Golgi apparatus membrane</location>
    </subcellularLocation>
    <subcellularLocation>
        <location evidence="2">Nucleus envelope</location>
    </subcellularLocation>
    <text evidence="2">Translocates to intracellular membranes in a calcium-dependent way.</text>
</comment>
<comment type="tissue specificity">
    <text evidence="8">Detected in granulosa cells after stimulation with chorionic gonadotropin (at protein level).</text>
</comment>
<comment type="developmental stage">
    <text evidence="8">Highly expressed in granulosa cells of ovulatory follicles. Detected at low levels in granulosa cells during the rest of the estrous cycle.</text>
</comment>
<comment type="domain">
    <text evidence="2">The N-terminal C2 domain associates with lipid membranes upon calcium binding. It modulates enzyme activity by presenting the active site to its substrate in response to elevations of cytosolic calcium. In the presence of phosphoinositides, regulates phospholipase A2 and lysophospholipase activities in a calcium-independent way.</text>
</comment>
<comment type="PTM">
    <text evidence="2">Phosphorylated at both Ser-505 and Ser-727 in response to mitogenic stimuli.</text>
</comment>
<gene>
    <name type="primary">PLA2G4A</name>
    <name type="synonym">CPLA2</name>
    <name type="synonym">PLA2G4</name>
</gene>
<feature type="chain" id="PRO_0000345133" description="Cytosolic phospholipase A2">
    <location>
        <begin position="1"/>
        <end position="749"/>
    </location>
</feature>
<feature type="domain" description="C2" evidence="5">
    <location>
        <begin position="6"/>
        <end position="122"/>
    </location>
</feature>
<feature type="domain" description="PLA2c" evidence="6">
    <location>
        <begin position="140"/>
        <end position="740"/>
    </location>
</feature>
<feature type="region of interest" description="Phospholipid binding" evidence="1">
    <location>
        <begin position="1"/>
        <end position="178"/>
    </location>
</feature>
<feature type="region of interest" description="Disordered" evidence="7">
    <location>
        <begin position="426"/>
        <end position="458"/>
    </location>
</feature>
<feature type="compositionally biased region" description="Basic and acidic residues" evidence="7">
    <location>
        <begin position="446"/>
        <end position="457"/>
    </location>
</feature>
<feature type="active site" description="Nucleophile" evidence="1">
    <location>
        <position position="228"/>
    </location>
</feature>
<feature type="active site" description="Proton acceptor" evidence="1">
    <location>
        <position position="549"/>
    </location>
</feature>
<feature type="binding site" evidence="1">
    <location>
        <position position="40"/>
    </location>
    <ligand>
        <name>Ca(2+)</name>
        <dbReference type="ChEBI" id="CHEBI:29108"/>
        <label>1</label>
    </ligand>
</feature>
<feature type="binding site" evidence="1">
    <location>
        <position position="40"/>
    </location>
    <ligand>
        <name>Ca(2+)</name>
        <dbReference type="ChEBI" id="CHEBI:29108"/>
        <label>2</label>
    </ligand>
</feature>
<feature type="binding site" evidence="1">
    <location>
        <position position="41"/>
    </location>
    <ligand>
        <name>Ca(2+)</name>
        <dbReference type="ChEBI" id="CHEBI:29108"/>
        <label>1</label>
    </ligand>
</feature>
<feature type="binding site" evidence="1">
    <location>
        <position position="43"/>
    </location>
    <ligand>
        <name>Ca(2+)</name>
        <dbReference type="ChEBI" id="CHEBI:29108"/>
        <label>1</label>
    </ligand>
</feature>
<feature type="binding site" evidence="1">
    <location>
        <position position="43"/>
    </location>
    <ligand>
        <name>Ca(2+)</name>
        <dbReference type="ChEBI" id="CHEBI:29108"/>
        <label>2</label>
    </ligand>
</feature>
<feature type="binding site" evidence="1">
    <location>
        <position position="65"/>
    </location>
    <ligand>
        <name>Ca(2+)</name>
        <dbReference type="ChEBI" id="CHEBI:29108"/>
        <label>1</label>
    </ligand>
</feature>
<feature type="binding site" evidence="1">
    <location>
        <position position="93"/>
    </location>
    <ligand>
        <name>Ca(2+)</name>
        <dbReference type="ChEBI" id="CHEBI:29108"/>
        <label>2</label>
    </ligand>
</feature>
<feature type="binding site" evidence="1">
    <location>
        <position position="94"/>
    </location>
    <ligand>
        <name>Ca(2+)</name>
        <dbReference type="ChEBI" id="CHEBI:29108"/>
        <label>2</label>
    </ligand>
</feature>
<feature type="binding site" evidence="1">
    <location>
        <position position="95"/>
    </location>
    <ligand>
        <name>Ca(2+)</name>
        <dbReference type="ChEBI" id="CHEBI:29108"/>
        <label>2</label>
    </ligand>
</feature>
<feature type="modified residue" description="Phosphoserine" evidence="2">
    <location>
        <position position="2"/>
    </location>
</feature>
<feature type="modified residue" description="Phosphothreonine" evidence="2">
    <location>
        <position position="268"/>
    </location>
</feature>
<feature type="modified residue" description="Phosphoserine" evidence="4">
    <location>
        <position position="434"/>
    </location>
</feature>
<feature type="modified residue" description="Phosphoserine" evidence="2">
    <location>
        <position position="435"/>
    </location>
</feature>
<feature type="modified residue" description="Phosphoserine" evidence="2">
    <location>
        <position position="437"/>
    </location>
</feature>
<feature type="modified residue" description="Phosphoserine; by MAPK" evidence="2">
    <location>
        <position position="505"/>
    </location>
</feature>
<feature type="modified residue" description="Phosphoserine" evidence="4">
    <location>
        <position position="515"/>
    </location>
</feature>
<feature type="modified residue" description="Phosphoserine" evidence="2">
    <location>
        <position position="727"/>
    </location>
</feature>
<feature type="modified residue" description="Phosphoserine" evidence="2">
    <location>
        <position position="729"/>
    </location>
</feature>
<feature type="cross-link" description="Glycyl lysine isopeptide (Lys-Gly) (interchain with G-Cter in SUMO2)" evidence="2">
    <location>
        <position position="541"/>
    </location>
</feature>
<feature type="cross-link" description="Glycyl lysine isopeptide (Lys-Gly) (interchain with G-Cter in SUMO2)" evidence="2">
    <location>
        <position position="606"/>
    </location>
</feature>
<feature type="sequence conflict" description="In Ref. 1; AAR17479." evidence="9" ref="1">
    <original>S</original>
    <variation>G</variation>
    <location>
        <position position="581"/>
    </location>
</feature>
<evidence type="ECO:0000250" key="1"/>
<evidence type="ECO:0000250" key="2">
    <source>
        <dbReference type="UniProtKB" id="P47712"/>
    </source>
</evidence>
<evidence type="ECO:0000250" key="3">
    <source>
        <dbReference type="UniProtKB" id="P47713"/>
    </source>
</evidence>
<evidence type="ECO:0000250" key="4">
    <source>
        <dbReference type="UniProtKB" id="P50393"/>
    </source>
</evidence>
<evidence type="ECO:0000255" key="5">
    <source>
        <dbReference type="PROSITE-ProRule" id="PRU00041"/>
    </source>
</evidence>
<evidence type="ECO:0000255" key="6">
    <source>
        <dbReference type="PROSITE-ProRule" id="PRU00555"/>
    </source>
</evidence>
<evidence type="ECO:0000256" key="7">
    <source>
        <dbReference type="SAM" id="MobiDB-lite"/>
    </source>
</evidence>
<evidence type="ECO:0000269" key="8">
    <source>
    </source>
</evidence>
<evidence type="ECO:0000305" key="9"/>
<protein>
    <recommendedName>
        <fullName>Cytosolic phospholipase A2</fullName>
        <shortName>cPLA2</shortName>
    </recommendedName>
    <alternativeName>
        <fullName>Phospholipase A2 group IVA</fullName>
    </alternativeName>
    <domain>
        <recommendedName>
            <fullName>Phospholipase A2</fullName>
            <ecNumber evidence="2">3.1.1.4</ecNumber>
        </recommendedName>
        <alternativeName>
            <fullName>Phosphatidylcholine 2-acylhydrolase</fullName>
        </alternativeName>
    </domain>
    <domain>
        <recommendedName>
            <fullName>Lysophospholipase</fullName>
            <ecNumber evidence="2">3.1.1.5</ecNumber>
        </recommendedName>
    </domain>
</protein>
<proteinExistence type="evidence at protein level"/>
<organism>
    <name type="scientific">Bos taurus</name>
    <name type="common">Bovine</name>
    <dbReference type="NCBI Taxonomy" id="9913"/>
    <lineage>
        <taxon>Eukaryota</taxon>
        <taxon>Metazoa</taxon>
        <taxon>Chordata</taxon>
        <taxon>Craniata</taxon>
        <taxon>Vertebrata</taxon>
        <taxon>Euteleostomi</taxon>
        <taxon>Mammalia</taxon>
        <taxon>Eutheria</taxon>
        <taxon>Laurasiatheria</taxon>
        <taxon>Artiodactyla</taxon>
        <taxon>Ruminantia</taxon>
        <taxon>Pecora</taxon>
        <taxon>Bovidae</taxon>
        <taxon>Bovinae</taxon>
        <taxon>Bos</taxon>
    </lineage>
</organism>
<reference key="1">
    <citation type="journal article" date="2006" name="Biol. Reprod.">
        <title>Expression of phospholipase A2 group IVA (PLA2G4A) is upregulated by human chorionic gonadotropin in bovine granulosa cells of ovulatory follicles.</title>
        <authorList>
            <person name="Diouf M.N."/>
            <person name="Sayasith K."/>
            <person name="Lefebvre R."/>
            <person name="Silversides D.W."/>
            <person name="Sirois J."/>
            <person name="Lussier J.G."/>
        </authorList>
    </citation>
    <scope>NUCLEOTIDE SEQUENCE [MRNA]</scope>
    <scope>TISSUE SPECIFICITY</scope>
    <scope>DEVELOPMENTAL STAGE</scope>
    <source>
        <tissue>Follicular cell</tissue>
    </source>
</reference>
<reference key="2">
    <citation type="submission" date="2007-03" db="EMBL/GenBank/DDBJ databases">
        <authorList>
            <consortium name="NIH - Mammalian Gene Collection (MGC) project"/>
        </authorList>
    </citation>
    <scope>NUCLEOTIDE SEQUENCE [LARGE SCALE MRNA]</scope>
    <source>
        <strain>Hereford</strain>
        <tissue>Fetal skin</tissue>
    </source>
</reference>
<name>PA24A_BOVIN</name>
<dbReference type="EC" id="3.1.1.4" evidence="2"/>
<dbReference type="EC" id="3.1.1.5" evidence="2"/>
<dbReference type="EMBL" id="AY363688">
    <property type="protein sequence ID" value="AAR17479.1"/>
    <property type="molecule type" value="mRNA"/>
</dbReference>
<dbReference type="EMBL" id="BC134610">
    <property type="protein sequence ID" value="AAI34611.1"/>
    <property type="molecule type" value="mRNA"/>
</dbReference>
<dbReference type="RefSeq" id="NP_001069332.1">
    <property type="nucleotide sequence ID" value="NM_001075864.1"/>
</dbReference>
<dbReference type="RefSeq" id="XP_059731388.1">
    <property type="nucleotide sequence ID" value="XM_059875405.1"/>
</dbReference>
<dbReference type="SMR" id="A4IFJ5"/>
<dbReference type="FunCoup" id="A4IFJ5">
    <property type="interactions" value="592"/>
</dbReference>
<dbReference type="STRING" id="9913.ENSBTAP00000056878"/>
<dbReference type="BindingDB" id="A4IFJ5"/>
<dbReference type="ChEMBL" id="CHEMBL2304401"/>
<dbReference type="PaxDb" id="9913-ENSBTAP00000017685"/>
<dbReference type="PeptideAtlas" id="A4IFJ5"/>
<dbReference type="Ensembl" id="ENSBTAT00000017685.5">
    <property type="protein sequence ID" value="ENSBTAP00000017685.3"/>
    <property type="gene ID" value="ENSBTAG00000013298.5"/>
</dbReference>
<dbReference type="GeneID" id="525072"/>
<dbReference type="KEGG" id="bta:525072"/>
<dbReference type="CTD" id="5321"/>
<dbReference type="VEuPathDB" id="HostDB:ENSBTAG00000013298"/>
<dbReference type="VGNC" id="VGNC:32960">
    <property type="gene designation" value="PLA2G4A"/>
</dbReference>
<dbReference type="eggNOG" id="KOG1012">
    <property type="taxonomic scope" value="Eukaryota"/>
</dbReference>
<dbReference type="eggNOG" id="KOG1325">
    <property type="taxonomic scope" value="Eukaryota"/>
</dbReference>
<dbReference type="GeneTree" id="ENSGT01030000234606"/>
<dbReference type="HOGENOM" id="CLU_011663_1_1_1"/>
<dbReference type="InParanoid" id="A4IFJ5"/>
<dbReference type="OMA" id="NQESWVQ"/>
<dbReference type="OrthoDB" id="419768at2759"/>
<dbReference type="TreeFam" id="TF325228"/>
<dbReference type="Reactome" id="R-BTA-111995">
    <property type="pathway name" value="phospho-PLA2 pathway"/>
</dbReference>
<dbReference type="Reactome" id="R-BTA-1482788">
    <property type="pathway name" value="Acyl chain remodelling of PC"/>
</dbReference>
<dbReference type="Reactome" id="R-BTA-1482798">
    <property type="pathway name" value="Acyl chain remodeling of CL"/>
</dbReference>
<dbReference type="Reactome" id="R-BTA-1482801">
    <property type="pathway name" value="Acyl chain remodelling of PS"/>
</dbReference>
<dbReference type="Reactome" id="R-BTA-1482839">
    <property type="pathway name" value="Acyl chain remodelling of PE"/>
</dbReference>
<dbReference type="Reactome" id="R-BTA-1482922">
    <property type="pathway name" value="Acyl chain remodelling of PI"/>
</dbReference>
<dbReference type="Reactome" id="R-BTA-1482925">
    <property type="pathway name" value="Acyl chain remodelling of PG"/>
</dbReference>
<dbReference type="Reactome" id="R-BTA-1483115">
    <property type="pathway name" value="Hydrolysis of LPC"/>
</dbReference>
<dbReference type="Reactome" id="R-BTA-1483166">
    <property type="pathway name" value="Synthesis of PA"/>
</dbReference>
<dbReference type="Reactome" id="R-BTA-2142753">
    <property type="pathway name" value="Arachidonate metabolism"/>
</dbReference>
<dbReference type="Reactome" id="R-BTA-418592">
    <property type="pathway name" value="ADP signalling through P2Y purinoceptor 1"/>
</dbReference>
<dbReference type="Reactome" id="R-BTA-432142">
    <property type="pathway name" value="Platelet sensitization by LDL"/>
</dbReference>
<dbReference type="Reactome" id="R-BTA-6811436">
    <property type="pathway name" value="COPI-independent Golgi-to-ER retrograde traffic"/>
</dbReference>
<dbReference type="UniPathway" id="UPA00383"/>
<dbReference type="UniPathway" id="UPA00662"/>
<dbReference type="UniPathway" id="UPA00878"/>
<dbReference type="UniPathway" id="UPA00940"/>
<dbReference type="PRO" id="PR:A4IFJ5"/>
<dbReference type="Proteomes" id="UP000009136">
    <property type="component" value="Chromosome 16"/>
</dbReference>
<dbReference type="Bgee" id="ENSBTAG00000013298">
    <property type="expression patterns" value="Expressed in lung and 100 other cell types or tissues"/>
</dbReference>
<dbReference type="GO" id="GO:0005737">
    <property type="term" value="C:cytoplasm"/>
    <property type="evidence" value="ECO:0000250"/>
    <property type="project" value="UniProtKB"/>
</dbReference>
<dbReference type="GO" id="GO:0005829">
    <property type="term" value="C:cytosol"/>
    <property type="evidence" value="ECO:0000318"/>
    <property type="project" value="GO_Central"/>
</dbReference>
<dbReference type="GO" id="GO:0005783">
    <property type="term" value="C:endoplasmic reticulum"/>
    <property type="evidence" value="ECO:0000318"/>
    <property type="project" value="GO_Central"/>
</dbReference>
<dbReference type="GO" id="GO:0005794">
    <property type="term" value="C:Golgi apparatus"/>
    <property type="evidence" value="ECO:0000318"/>
    <property type="project" value="GO_Central"/>
</dbReference>
<dbReference type="GO" id="GO:0000139">
    <property type="term" value="C:Golgi membrane"/>
    <property type="evidence" value="ECO:0000250"/>
    <property type="project" value="UniProtKB"/>
</dbReference>
<dbReference type="GO" id="GO:0005635">
    <property type="term" value="C:nuclear envelope"/>
    <property type="evidence" value="ECO:0000250"/>
    <property type="project" value="UniProtKB"/>
</dbReference>
<dbReference type="GO" id="GO:0005634">
    <property type="term" value="C:nucleus"/>
    <property type="evidence" value="ECO:0000318"/>
    <property type="project" value="GO_Central"/>
</dbReference>
<dbReference type="GO" id="GO:0005509">
    <property type="term" value="F:calcium ion binding"/>
    <property type="evidence" value="ECO:0000250"/>
    <property type="project" value="UniProtKB"/>
</dbReference>
<dbReference type="GO" id="GO:0047498">
    <property type="term" value="F:calcium-dependent phospholipase A2 activity"/>
    <property type="evidence" value="ECO:0000250"/>
    <property type="project" value="UniProtKB"/>
</dbReference>
<dbReference type="GO" id="GO:0005544">
    <property type="term" value="F:calcium-dependent phospholipid binding"/>
    <property type="evidence" value="ECO:0000250"/>
    <property type="project" value="UniProtKB"/>
</dbReference>
<dbReference type="GO" id="GO:1902387">
    <property type="term" value="F:ceramide 1-phosphate binding"/>
    <property type="evidence" value="ECO:0000250"/>
    <property type="project" value="UniProtKB"/>
</dbReference>
<dbReference type="GO" id="GO:0004622">
    <property type="term" value="F:lysophospholipase activity"/>
    <property type="evidence" value="ECO:0000250"/>
    <property type="project" value="UniProtKB"/>
</dbReference>
<dbReference type="GO" id="GO:0008374">
    <property type="term" value="F:O-acyltransferase activity"/>
    <property type="evidence" value="ECO:0000250"/>
    <property type="project" value="UniProtKB"/>
</dbReference>
<dbReference type="GO" id="GO:0032266">
    <property type="term" value="F:phosphatidylinositol-3-phosphate binding"/>
    <property type="evidence" value="ECO:0000250"/>
    <property type="project" value="UniProtKB"/>
</dbReference>
<dbReference type="GO" id="GO:0070273">
    <property type="term" value="F:phosphatidylinositol-4-phosphate binding"/>
    <property type="evidence" value="ECO:0000250"/>
    <property type="project" value="UniProtKB"/>
</dbReference>
<dbReference type="GO" id="GO:0010314">
    <property type="term" value="F:phosphatidylinositol-5-phosphate binding"/>
    <property type="evidence" value="ECO:0000250"/>
    <property type="project" value="UniProtKB"/>
</dbReference>
<dbReference type="GO" id="GO:0004623">
    <property type="term" value="F:phospholipase A2 activity"/>
    <property type="evidence" value="ECO:0000250"/>
    <property type="project" value="UniProtKB"/>
</dbReference>
<dbReference type="GO" id="GO:0019369">
    <property type="term" value="P:arachidonate metabolic process"/>
    <property type="evidence" value="ECO:0000250"/>
    <property type="project" value="UniProtKB"/>
</dbReference>
<dbReference type="GO" id="GO:0006071">
    <property type="term" value="P:glycerol metabolic process"/>
    <property type="evidence" value="ECO:0007669"/>
    <property type="project" value="UniProtKB-KW"/>
</dbReference>
<dbReference type="GO" id="GO:0046475">
    <property type="term" value="P:glycerophospholipid catabolic process"/>
    <property type="evidence" value="ECO:0000318"/>
    <property type="project" value="GO_Central"/>
</dbReference>
<dbReference type="GO" id="GO:0019370">
    <property type="term" value="P:leukotriene biosynthetic process"/>
    <property type="evidence" value="ECO:0007669"/>
    <property type="project" value="UniProtKB-KW"/>
</dbReference>
<dbReference type="GO" id="GO:0006640">
    <property type="term" value="P:monoacylglycerol biosynthetic process"/>
    <property type="evidence" value="ECO:0000250"/>
    <property type="project" value="UniProtKB"/>
</dbReference>
<dbReference type="GO" id="GO:0034638">
    <property type="term" value="P:phosphatidylcholine catabolic process"/>
    <property type="evidence" value="ECO:0000250"/>
    <property type="project" value="UniProtKB"/>
</dbReference>
<dbReference type="GO" id="GO:0034478">
    <property type="term" value="P:phosphatidylglycerol catabolic process"/>
    <property type="evidence" value="ECO:0000250"/>
    <property type="project" value="UniProtKB"/>
</dbReference>
<dbReference type="GO" id="GO:0001516">
    <property type="term" value="P:prostaglandin biosynthetic process"/>
    <property type="evidence" value="ECO:0000250"/>
    <property type="project" value="UniProtKB"/>
</dbReference>
<dbReference type="CDD" id="cd04036">
    <property type="entry name" value="C2_cPLA2"/>
    <property type="match status" value="1"/>
</dbReference>
<dbReference type="CDD" id="cd07200">
    <property type="entry name" value="cPLA2_Grp-IVA"/>
    <property type="match status" value="1"/>
</dbReference>
<dbReference type="FunFam" id="2.60.40.150:FF:000030">
    <property type="entry name" value="Phospholipase A2"/>
    <property type="match status" value="1"/>
</dbReference>
<dbReference type="Gene3D" id="2.60.40.150">
    <property type="entry name" value="C2 domain"/>
    <property type="match status" value="1"/>
</dbReference>
<dbReference type="Gene3D" id="3.40.1090.10">
    <property type="entry name" value="Cytosolic phospholipase A2 catalytic domain"/>
    <property type="match status" value="1"/>
</dbReference>
<dbReference type="InterPro" id="IPR016035">
    <property type="entry name" value="Acyl_Trfase/lysoPLipase"/>
</dbReference>
<dbReference type="InterPro" id="IPR041847">
    <property type="entry name" value="C2_cPLA2"/>
</dbReference>
<dbReference type="InterPro" id="IPR000008">
    <property type="entry name" value="C2_dom"/>
</dbReference>
<dbReference type="InterPro" id="IPR035892">
    <property type="entry name" value="C2_domain_sf"/>
</dbReference>
<dbReference type="InterPro" id="IPR002642">
    <property type="entry name" value="LysoPLipase_cat_dom"/>
</dbReference>
<dbReference type="PANTHER" id="PTHR10728">
    <property type="entry name" value="CYTOSOLIC PHOSPHOLIPASE A2"/>
    <property type="match status" value="1"/>
</dbReference>
<dbReference type="PANTHER" id="PTHR10728:SF13">
    <property type="entry name" value="CYTOSOLIC PHOSPHOLIPASE A2"/>
    <property type="match status" value="1"/>
</dbReference>
<dbReference type="Pfam" id="PF00168">
    <property type="entry name" value="C2"/>
    <property type="match status" value="1"/>
</dbReference>
<dbReference type="Pfam" id="PF01735">
    <property type="entry name" value="PLA2_B"/>
    <property type="match status" value="1"/>
</dbReference>
<dbReference type="SMART" id="SM00239">
    <property type="entry name" value="C2"/>
    <property type="match status" value="1"/>
</dbReference>
<dbReference type="SMART" id="SM00022">
    <property type="entry name" value="PLAc"/>
    <property type="match status" value="1"/>
</dbReference>
<dbReference type="SUPFAM" id="SSF49562">
    <property type="entry name" value="C2 domain (Calcium/lipid-binding domain, CaLB)"/>
    <property type="match status" value="1"/>
</dbReference>
<dbReference type="SUPFAM" id="SSF52151">
    <property type="entry name" value="FabD/lysophospholipase-like"/>
    <property type="match status" value="1"/>
</dbReference>
<dbReference type="PROSITE" id="PS50004">
    <property type="entry name" value="C2"/>
    <property type="match status" value="1"/>
</dbReference>
<dbReference type="PROSITE" id="PS51210">
    <property type="entry name" value="PLA2C"/>
    <property type="match status" value="1"/>
</dbReference>
<sequence>MSFIDPYQHIIVEHHYSHKFTVVVLRATKVTKGTFGDMLDTPDPYVELFISSTPDSRKRTRHFNNDINPVWNETFEFILDPNQENILEITLMDANYVMDETLGTTTFPISSMKVGEKKQVPFIFNQVTEMILEMSLEVCSSPDLRFSMALCDQEKAFRQQRKENIKENMKKLLGPKNSEGLHSTRDVPVVAILGSGGGFRAMVGFSGVMKALYESGILDCATYIAGLSGSTWYMSTLYSHPDFPEKGPEEINKELMKNVSHNPLLLLTPQKIKRYVESLWRKKSSGQPVTFTDIFGMLIGETLIHNRMNTTLSSLKEKVNTGQCPLPLFTCLHVKPDVSELMFADWVEFSPFEIGMAKYGTFMAPDLFGSKFFMGTVVKKYEENPLHFLMGVWGSAFSILFNRVLGVSGSQSKGSTMEEELENITAKHIVSNDSSDSDDESQGPKGTEHEEAEREYQNDNQASWVQRMLMALVSDSALFNTREGRAGKVHNFMLGLNLNTSYPMSPLRDFTMQESLDEDELDAAVADPDEFEQIYEPLDVKSKKIHVVDSGLTFNLPYPLILRPQRGVDLIISFDFSARPSDSSPPFKELLLAEKWAKMNKLPFPKIDPYVFDREGLKECYVFKPKNPDVEKDCPTIIHFVLANINFRKYKAPGVPRETNEEKEIADFDIFDDPESPFSTFNFQYPNQAFKRLHDLMYFNTLNNIDVIKNAIVESIEYRRQNPSRCSVSLSSVEARRFFNKEFLSKPTA</sequence>
<accession>A4IFJ5</accession>
<accession>Q1XD55</accession>
<keyword id="KW-0106">Calcium</keyword>
<keyword id="KW-0963">Cytoplasm</keyword>
<keyword id="KW-0275">Fatty acid biosynthesis</keyword>
<keyword id="KW-0276">Fatty acid metabolism</keyword>
<keyword id="KW-0319">Glycerol metabolism</keyword>
<keyword id="KW-0333">Golgi apparatus</keyword>
<keyword id="KW-0378">Hydrolase</keyword>
<keyword id="KW-1017">Isopeptide bond</keyword>
<keyword id="KW-0434">Leukotriene biosynthesis</keyword>
<keyword id="KW-0444">Lipid biosynthesis</keyword>
<keyword id="KW-0442">Lipid degradation</keyword>
<keyword id="KW-0443">Lipid metabolism</keyword>
<keyword id="KW-0446">Lipid-binding</keyword>
<keyword id="KW-0472">Membrane</keyword>
<keyword id="KW-0479">Metal-binding</keyword>
<keyword id="KW-0539">Nucleus</keyword>
<keyword id="KW-0595">Phospholipid degradation</keyword>
<keyword id="KW-1208">Phospholipid metabolism</keyword>
<keyword id="KW-0597">Phosphoprotein</keyword>
<keyword id="KW-0643">Prostaglandin biosynthesis</keyword>
<keyword id="KW-0644">Prostaglandin metabolism</keyword>
<keyword id="KW-1185">Reference proteome</keyword>
<keyword id="KW-0832">Ubl conjugation</keyword>